<accession>Q48RV9</accession>
<organism>
    <name type="scientific">Streptococcus pyogenes serotype M28 (strain MGAS6180)</name>
    <dbReference type="NCBI Taxonomy" id="319701"/>
    <lineage>
        <taxon>Bacteria</taxon>
        <taxon>Bacillati</taxon>
        <taxon>Bacillota</taxon>
        <taxon>Bacilli</taxon>
        <taxon>Lactobacillales</taxon>
        <taxon>Streptococcaceae</taxon>
        <taxon>Streptococcus</taxon>
    </lineage>
</organism>
<protein>
    <recommendedName>
        <fullName evidence="1">Galactose-6-phosphate isomerase subunit LacA 1</fullName>
        <ecNumber evidence="1">5.3.1.26</ecNumber>
    </recommendedName>
</protein>
<sequence>MAIILGADAHGNALKELIKSFLQEEGYDIIDVTDINSDFIDNTLAVAKAVNEAEGRLGIMVDAYGAGPFMVATKLKGMVAAEVSDERSAYMTRGHNNARMITIGAEIVGPELAKNIVKGFVTGPYDGGRHQIRVDMLNKMA</sequence>
<gene>
    <name evidence="1" type="primary">lacA1</name>
    <name type="synonym">lacA.1</name>
    <name type="ordered locus">M28_Spy1441</name>
</gene>
<keyword id="KW-0413">Isomerase</keyword>
<keyword id="KW-0423">Lactose metabolism</keyword>
<comment type="catalytic activity">
    <reaction evidence="1">
        <text>aldehydo-D-galactose 6-phosphate = keto-D-tagatose 6-phosphate</text>
        <dbReference type="Rhea" id="RHEA:13033"/>
        <dbReference type="ChEBI" id="CHEBI:58255"/>
        <dbReference type="ChEBI" id="CHEBI:134283"/>
        <dbReference type="EC" id="5.3.1.26"/>
    </reaction>
</comment>
<comment type="pathway">
    <text evidence="1">Carbohydrate metabolism; D-galactose 6-phosphate degradation; D-tagatose 6-phosphate from D-galactose 6-phosphate: step 1/1.</text>
</comment>
<comment type="subunit">
    <text evidence="1">Heteromultimeric protein consisting of LacA and LacB.</text>
</comment>
<comment type="similarity">
    <text evidence="1">Belongs to the LacAB/RpiB family.</text>
</comment>
<reference key="1">
    <citation type="journal article" date="2005" name="J. Infect. Dis.">
        <title>Genome sequence of a serotype M28 strain of group A Streptococcus: potential new insights into puerperal sepsis and bacterial disease specificity.</title>
        <authorList>
            <person name="Green N.M."/>
            <person name="Zhang S."/>
            <person name="Porcella S.F."/>
            <person name="Nagiec M.J."/>
            <person name="Barbian K.D."/>
            <person name="Beres S.B."/>
            <person name="Lefebvre R.B."/>
            <person name="Musser J.M."/>
        </authorList>
    </citation>
    <scope>NUCLEOTIDE SEQUENCE [LARGE SCALE GENOMIC DNA]</scope>
    <source>
        <strain>MGAS6180</strain>
    </source>
</reference>
<dbReference type="EC" id="5.3.1.26" evidence="1"/>
<dbReference type="EMBL" id="CP000056">
    <property type="protein sequence ID" value="AAX72551.1"/>
    <property type="molecule type" value="Genomic_DNA"/>
</dbReference>
<dbReference type="SMR" id="Q48RV9"/>
<dbReference type="KEGG" id="spb:M28_Spy1441"/>
<dbReference type="HOGENOM" id="CLU_091396_4_2_9"/>
<dbReference type="UniPathway" id="UPA00702">
    <property type="reaction ID" value="UER00714"/>
</dbReference>
<dbReference type="GO" id="GO:0050044">
    <property type="term" value="F:galactose-6-phosphate isomerase activity"/>
    <property type="evidence" value="ECO:0007669"/>
    <property type="project" value="UniProtKB-UniRule"/>
</dbReference>
<dbReference type="GO" id="GO:0004751">
    <property type="term" value="F:ribose-5-phosphate isomerase activity"/>
    <property type="evidence" value="ECO:0007669"/>
    <property type="project" value="TreeGrafter"/>
</dbReference>
<dbReference type="GO" id="GO:0019316">
    <property type="term" value="P:D-allose catabolic process"/>
    <property type="evidence" value="ECO:0007669"/>
    <property type="project" value="TreeGrafter"/>
</dbReference>
<dbReference type="GO" id="GO:0019388">
    <property type="term" value="P:galactose catabolic process"/>
    <property type="evidence" value="ECO:0007669"/>
    <property type="project" value="UniProtKB-UniPathway"/>
</dbReference>
<dbReference type="GO" id="GO:0019512">
    <property type="term" value="P:lactose catabolic process via tagatose-6-phosphate"/>
    <property type="evidence" value="ECO:0007669"/>
    <property type="project" value="UniProtKB-UniRule"/>
</dbReference>
<dbReference type="GO" id="GO:0009052">
    <property type="term" value="P:pentose-phosphate shunt, non-oxidative branch"/>
    <property type="evidence" value="ECO:0007669"/>
    <property type="project" value="TreeGrafter"/>
</dbReference>
<dbReference type="Gene3D" id="3.40.1400.10">
    <property type="entry name" value="Sugar-phosphate isomerase, RpiB/LacA/LacB"/>
    <property type="match status" value="1"/>
</dbReference>
<dbReference type="HAMAP" id="MF_01555">
    <property type="entry name" value="LacA"/>
    <property type="match status" value="1"/>
</dbReference>
<dbReference type="InterPro" id="IPR004783">
    <property type="entry name" value="LacA"/>
</dbReference>
<dbReference type="InterPro" id="IPR003500">
    <property type="entry name" value="RpiB_LacA_LacB"/>
</dbReference>
<dbReference type="InterPro" id="IPR036569">
    <property type="entry name" value="RpiB_LacA_LacB_sf"/>
</dbReference>
<dbReference type="NCBIfam" id="TIGR01118">
    <property type="entry name" value="lacA"/>
    <property type="match status" value="1"/>
</dbReference>
<dbReference type="NCBIfam" id="NF006380">
    <property type="entry name" value="PRK08621.1"/>
    <property type="match status" value="1"/>
</dbReference>
<dbReference type="NCBIfam" id="NF009257">
    <property type="entry name" value="PRK12613.1"/>
    <property type="match status" value="1"/>
</dbReference>
<dbReference type="NCBIfam" id="TIGR00689">
    <property type="entry name" value="rpiB_lacA_lacB"/>
    <property type="match status" value="1"/>
</dbReference>
<dbReference type="PANTHER" id="PTHR30345:SF5">
    <property type="entry name" value="GALACTOSE-6-PHOSPHATE ISOMERASE SUBUNIT LACA"/>
    <property type="match status" value="1"/>
</dbReference>
<dbReference type="PANTHER" id="PTHR30345">
    <property type="entry name" value="RIBOSE-5-PHOSPHATE ISOMERASE B"/>
    <property type="match status" value="1"/>
</dbReference>
<dbReference type="Pfam" id="PF02502">
    <property type="entry name" value="LacAB_rpiB"/>
    <property type="match status" value="1"/>
</dbReference>
<dbReference type="PIRSF" id="PIRSF005384">
    <property type="entry name" value="RpiB_LacA_B"/>
    <property type="match status" value="1"/>
</dbReference>
<dbReference type="SUPFAM" id="SSF89623">
    <property type="entry name" value="Ribose/Galactose isomerase RpiB/AlsB"/>
    <property type="match status" value="1"/>
</dbReference>
<name>LACA1_STRPM</name>
<proteinExistence type="inferred from homology"/>
<feature type="chain" id="PRO_0000208126" description="Galactose-6-phosphate isomerase subunit LacA 1">
    <location>
        <begin position="1"/>
        <end position="141"/>
    </location>
</feature>
<evidence type="ECO:0000255" key="1">
    <source>
        <dbReference type="HAMAP-Rule" id="MF_01555"/>
    </source>
</evidence>